<accession>Q0BJL9</accession>
<comment type="function">
    <text evidence="1">F(1)F(0) ATP synthase produces ATP from ADP in the presence of a proton or sodium gradient. F-type ATPases consist of two structural domains, F(1) containing the extramembraneous catalytic core and F(0) containing the membrane proton channel, linked together by a central stalk and a peripheral stalk. During catalysis, ATP synthesis in the catalytic domain of F(1) is coupled via a rotary mechanism of the central stalk subunits to proton translocation.</text>
</comment>
<comment type="function">
    <text evidence="1">Component of the F(0) channel, it forms part of the peripheral stalk, linking F(1) to F(0).</text>
</comment>
<comment type="subunit">
    <text evidence="1">F-type ATPases have 2 components, F(1) - the catalytic core - and F(0) - the membrane proton channel. F(1) has five subunits: alpha(3), beta(3), gamma(1), delta(1), epsilon(1). F(0) has three main subunits: a(1), b(2) and c(10-14). The alpha and beta chains form an alternating ring which encloses part of the gamma chain. F(1) is attached to F(0) by a central stalk formed by the gamma and epsilon chains, while a peripheral stalk is formed by the delta and b chains.</text>
</comment>
<comment type="subcellular location">
    <subcellularLocation>
        <location evidence="1">Cell inner membrane</location>
        <topology evidence="1">Single-pass membrane protein</topology>
    </subcellularLocation>
</comment>
<comment type="similarity">
    <text evidence="1">Belongs to the ATPase B chain family.</text>
</comment>
<dbReference type="EMBL" id="CP000440">
    <property type="protein sequence ID" value="ABI85654.1"/>
    <property type="molecule type" value="Genomic_DNA"/>
</dbReference>
<dbReference type="RefSeq" id="WP_006751767.1">
    <property type="nucleotide sequence ID" value="NZ_CP009798.1"/>
</dbReference>
<dbReference type="SMR" id="Q0BJL9"/>
<dbReference type="KEGG" id="bam:Bamb_0093"/>
<dbReference type="PATRIC" id="fig|339670.21.peg.1540"/>
<dbReference type="eggNOG" id="COG0711">
    <property type="taxonomic scope" value="Bacteria"/>
</dbReference>
<dbReference type="Proteomes" id="UP000000662">
    <property type="component" value="Chromosome 1"/>
</dbReference>
<dbReference type="GO" id="GO:0005886">
    <property type="term" value="C:plasma membrane"/>
    <property type="evidence" value="ECO:0007669"/>
    <property type="project" value="UniProtKB-SubCell"/>
</dbReference>
<dbReference type="GO" id="GO:0045259">
    <property type="term" value="C:proton-transporting ATP synthase complex"/>
    <property type="evidence" value="ECO:0007669"/>
    <property type="project" value="UniProtKB-KW"/>
</dbReference>
<dbReference type="GO" id="GO:0046933">
    <property type="term" value="F:proton-transporting ATP synthase activity, rotational mechanism"/>
    <property type="evidence" value="ECO:0007669"/>
    <property type="project" value="UniProtKB-UniRule"/>
</dbReference>
<dbReference type="GO" id="GO:0046961">
    <property type="term" value="F:proton-transporting ATPase activity, rotational mechanism"/>
    <property type="evidence" value="ECO:0007669"/>
    <property type="project" value="TreeGrafter"/>
</dbReference>
<dbReference type="CDD" id="cd06503">
    <property type="entry name" value="ATP-synt_Fo_b"/>
    <property type="match status" value="1"/>
</dbReference>
<dbReference type="Gene3D" id="6.10.250.1580">
    <property type="match status" value="1"/>
</dbReference>
<dbReference type="HAMAP" id="MF_01398">
    <property type="entry name" value="ATP_synth_b_bprime"/>
    <property type="match status" value="1"/>
</dbReference>
<dbReference type="InterPro" id="IPR028987">
    <property type="entry name" value="ATP_synth_B-like_membr_sf"/>
</dbReference>
<dbReference type="InterPro" id="IPR002146">
    <property type="entry name" value="ATP_synth_b/b'su_bac/chlpt"/>
</dbReference>
<dbReference type="InterPro" id="IPR005864">
    <property type="entry name" value="ATP_synth_F0_bsu_bac"/>
</dbReference>
<dbReference type="InterPro" id="IPR050059">
    <property type="entry name" value="ATP_synthase_B_chain"/>
</dbReference>
<dbReference type="NCBIfam" id="TIGR01144">
    <property type="entry name" value="ATP_synt_b"/>
    <property type="match status" value="1"/>
</dbReference>
<dbReference type="NCBIfam" id="NF004411">
    <property type="entry name" value="PRK05759.1-2"/>
    <property type="match status" value="1"/>
</dbReference>
<dbReference type="PANTHER" id="PTHR33445:SF1">
    <property type="entry name" value="ATP SYNTHASE SUBUNIT B"/>
    <property type="match status" value="1"/>
</dbReference>
<dbReference type="PANTHER" id="PTHR33445">
    <property type="entry name" value="ATP SYNTHASE SUBUNIT B', CHLOROPLASTIC"/>
    <property type="match status" value="1"/>
</dbReference>
<dbReference type="Pfam" id="PF00430">
    <property type="entry name" value="ATP-synt_B"/>
    <property type="match status" value="1"/>
</dbReference>
<dbReference type="SUPFAM" id="SSF81573">
    <property type="entry name" value="F1F0 ATP synthase subunit B, membrane domain"/>
    <property type="match status" value="1"/>
</dbReference>
<keyword id="KW-0066">ATP synthesis</keyword>
<keyword id="KW-0997">Cell inner membrane</keyword>
<keyword id="KW-1003">Cell membrane</keyword>
<keyword id="KW-0138">CF(0)</keyword>
<keyword id="KW-0375">Hydrogen ion transport</keyword>
<keyword id="KW-0406">Ion transport</keyword>
<keyword id="KW-0472">Membrane</keyword>
<keyword id="KW-0812">Transmembrane</keyword>
<keyword id="KW-1133">Transmembrane helix</keyword>
<keyword id="KW-0813">Transport</keyword>
<gene>
    <name evidence="1" type="primary">atpF</name>
    <name type="ordered locus">Bamb_0093</name>
</gene>
<sequence length="156" mass="17078">MNLNATLFAQMVVFLVLAWFTMKFVWPPLINALDERSKKIADGLAAAEKGKAELDAAHKRVDQELAQARNDGQQRIADAEKRAQAVAEEIKANAQAEAARIVAQAKAEAEQQIVKAREALRGEVASLAVKGAEQILKREVDQTAHAQLLNQLKAEL</sequence>
<protein>
    <recommendedName>
        <fullName evidence="1">ATP synthase subunit b</fullName>
    </recommendedName>
    <alternativeName>
        <fullName evidence="1">ATP synthase F(0) sector subunit b</fullName>
    </alternativeName>
    <alternativeName>
        <fullName evidence="1">ATPase subunit I</fullName>
    </alternativeName>
    <alternativeName>
        <fullName evidence="1">F-type ATPase subunit b</fullName>
        <shortName evidence="1">F-ATPase subunit b</shortName>
    </alternativeName>
</protein>
<evidence type="ECO:0000255" key="1">
    <source>
        <dbReference type="HAMAP-Rule" id="MF_01398"/>
    </source>
</evidence>
<name>ATPF_BURCM</name>
<proteinExistence type="inferred from homology"/>
<reference key="1">
    <citation type="submission" date="2006-08" db="EMBL/GenBank/DDBJ databases">
        <title>Complete sequence of chromosome 1 of Burkholderia cepacia AMMD.</title>
        <authorList>
            <person name="Copeland A."/>
            <person name="Lucas S."/>
            <person name="Lapidus A."/>
            <person name="Barry K."/>
            <person name="Detter J.C."/>
            <person name="Glavina del Rio T."/>
            <person name="Hammon N."/>
            <person name="Israni S."/>
            <person name="Pitluck S."/>
            <person name="Bruce D."/>
            <person name="Chain P."/>
            <person name="Malfatti S."/>
            <person name="Shin M."/>
            <person name="Vergez L."/>
            <person name="Schmutz J."/>
            <person name="Larimer F."/>
            <person name="Land M."/>
            <person name="Hauser L."/>
            <person name="Kyrpides N."/>
            <person name="Kim E."/>
            <person name="Parke J."/>
            <person name="Coenye T."/>
            <person name="Konstantinidis K."/>
            <person name="Ramette A."/>
            <person name="Tiedje J."/>
            <person name="Richardson P."/>
        </authorList>
    </citation>
    <scope>NUCLEOTIDE SEQUENCE [LARGE SCALE GENOMIC DNA]</scope>
    <source>
        <strain>ATCC BAA-244 / DSM 16087 / CCUG 44356 / LMG 19182 / AMMD</strain>
    </source>
</reference>
<organism>
    <name type="scientific">Burkholderia ambifaria (strain ATCC BAA-244 / DSM 16087 / CCUG 44356 / LMG 19182 / AMMD)</name>
    <name type="common">Burkholderia cepacia (strain AMMD)</name>
    <dbReference type="NCBI Taxonomy" id="339670"/>
    <lineage>
        <taxon>Bacteria</taxon>
        <taxon>Pseudomonadati</taxon>
        <taxon>Pseudomonadota</taxon>
        <taxon>Betaproteobacteria</taxon>
        <taxon>Burkholderiales</taxon>
        <taxon>Burkholderiaceae</taxon>
        <taxon>Burkholderia</taxon>
        <taxon>Burkholderia cepacia complex</taxon>
    </lineage>
</organism>
<feature type="chain" id="PRO_0000368378" description="ATP synthase subunit b">
    <location>
        <begin position="1"/>
        <end position="156"/>
    </location>
</feature>
<feature type="transmembrane region" description="Helical" evidence="1">
    <location>
        <begin position="7"/>
        <end position="29"/>
    </location>
</feature>